<name>YCCT_SHIF8</name>
<feature type="signal peptide" evidence="1">
    <location>
        <begin position="1"/>
        <end position="20"/>
    </location>
</feature>
<feature type="chain" id="PRO_1000046909" description="UPF0319 protein YccT">
    <location>
        <begin position="21"/>
        <end position="220"/>
    </location>
</feature>
<protein>
    <recommendedName>
        <fullName evidence="1">UPF0319 protein YccT</fullName>
    </recommendedName>
</protein>
<sequence>MKTGIVTTLIALCLPVSVFATTLRLSTDVDLLVLDGKKVSSSLLRGADSIELDNGPHQLVFRVEKTIHLSNSEERLYISPPLVVSFNTQLINQVNFRLPRLENEREANHFDAAPRLELLDGDATPIPVKLDILAITSTAKAIDYEVEVERYNKSAKRASLPQFATMMADDSTLLSGVSELDAIPPQSQVLTEQRLKYWFKLADPQTRNTFLQWAEKQPSS</sequence>
<comment type="similarity">
    <text evidence="1">Belongs to the UPF0319 family.</text>
</comment>
<gene>
    <name evidence="1" type="primary">yccT</name>
    <name type="ordered locus">SFV_0974</name>
</gene>
<proteinExistence type="inferred from homology"/>
<organism>
    <name type="scientific">Shigella flexneri serotype 5b (strain 8401)</name>
    <dbReference type="NCBI Taxonomy" id="373384"/>
    <lineage>
        <taxon>Bacteria</taxon>
        <taxon>Pseudomonadati</taxon>
        <taxon>Pseudomonadota</taxon>
        <taxon>Gammaproteobacteria</taxon>
        <taxon>Enterobacterales</taxon>
        <taxon>Enterobacteriaceae</taxon>
        <taxon>Shigella</taxon>
    </lineage>
</organism>
<reference key="1">
    <citation type="journal article" date="2006" name="BMC Genomics">
        <title>Complete genome sequence of Shigella flexneri 5b and comparison with Shigella flexneri 2a.</title>
        <authorList>
            <person name="Nie H."/>
            <person name="Yang F."/>
            <person name="Zhang X."/>
            <person name="Yang J."/>
            <person name="Chen L."/>
            <person name="Wang J."/>
            <person name="Xiong Z."/>
            <person name="Peng J."/>
            <person name="Sun L."/>
            <person name="Dong J."/>
            <person name="Xue Y."/>
            <person name="Xu X."/>
            <person name="Chen S."/>
            <person name="Yao Z."/>
            <person name="Shen Y."/>
            <person name="Jin Q."/>
        </authorList>
    </citation>
    <scope>NUCLEOTIDE SEQUENCE [LARGE SCALE GENOMIC DNA]</scope>
    <source>
        <strain>8401</strain>
    </source>
</reference>
<dbReference type="EMBL" id="CP000266">
    <property type="protein sequence ID" value="ABF03195.1"/>
    <property type="molecule type" value="Genomic_DNA"/>
</dbReference>
<dbReference type="RefSeq" id="WP_000847787.1">
    <property type="nucleotide sequence ID" value="NC_008258.1"/>
</dbReference>
<dbReference type="KEGG" id="sfv:SFV_0974"/>
<dbReference type="HOGENOM" id="CLU_073782_2_0_6"/>
<dbReference type="Proteomes" id="UP000000659">
    <property type="component" value="Chromosome"/>
</dbReference>
<dbReference type="HAMAP" id="MF_00789">
    <property type="entry name" value="UPF0319"/>
    <property type="match status" value="1"/>
</dbReference>
<dbReference type="InterPro" id="IPR018635">
    <property type="entry name" value="UPF0319"/>
</dbReference>
<dbReference type="NCBIfam" id="NF047712">
    <property type="entry name" value="CrliSynInhib"/>
    <property type="match status" value="1"/>
</dbReference>
<dbReference type="NCBIfam" id="NF002967">
    <property type="entry name" value="PRK03641.1"/>
    <property type="match status" value="1"/>
</dbReference>
<dbReference type="PANTHER" id="PTHR38108">
    <property type="entry name" value="UPF0319 PROTEIN YCCT"/>
    <property type="match status" value="1"/>
</dbReference>
<dbReference type="PANTHER" id="PTHR38108:SF1">
    <property type="entry name" value="UPF0319 PROTEIN YCCT"/>
    <property type="match status" value="1"/>
</dbReference>
<dbReference type="Pfam" id="PF09829">
    <property type="entry name" value="DUF2057"/>
    <property type="match status" value="1"/>
</dbReference>
<accession>Q0T670</accession>
<evidence type="ECO:0000255" key="1">
    <source>
        <dbReference type="HAMAP-Rule" id="MF_00789"/>
    </source>
</evidence>
<keyword id="KW-0732">Signal</keyword>